<reference key="1">
    <citation type="submission" date="2007-03" db="EMBL/GenBank/DDBJ databases">
        <title>Complete sequence of Prosthecochloris vibrioformis DSM 265.</title>
        <authorList>
            <consortium name="US DOE Joint Genome Institute"/>
            <person name="Copeland A."/>
            <person name="Lucas S."/>
            <person name="Lapidus A."/>
            <person name="Barry K."/>
            <person name="Detter J.C."/>
            <person name="Glavina del Rio T."/>
            <person name="Hammon N."/>
            <person name="Israni S."/>
            <person name="Pitluck S."/>
            <person name="Schmutz J."/>
            <person name="Larimer F."/>
            <person name="Land M."/>
            <person name="Hauser L."/>
            <person name="Mikhailova N."/>
            <person name="Li T."/>
            <person name="Overmann J."/>
            <person name="Schuster S.C."/>
            <person name="Bryant D.A."/>
            <person name="Richardson P."/>
        </authorList>
    </citation>
    <scope>NUCLEOTIDE SEQUENCE [LARGE SCALE GENOMIC DNA]</scope>
    <source>
        <strain>DSM 265 / 1930</strain>
    </source>
</reference>
<sequence length="371" mass="41679">MRLRSIQFENFRNHRSFSFEPEDGINLIYGQNGSGKTSILEGIHYCALTKGFVSAADGECLSFSAGYFLLTALFESSSGIETAVRLSYTKESGKKLQIDGNELKPFSLHIGSIPCISFSPPEIVIVSGPPGERRRFLDNAVCQSDRRYLDNLLIYRRLLQQRNALLQQLSQSPGKDRSMLQLWSENLASSAASVTAGRVRFLAEFHPFVELLHRDLSGGQMPSIEYRSTIGRLLEPVPESELRERFLQRFQENEQQEILRGQTLSGPHRDELIFLSDGRESKRYSSQGQQRTFLISLKLALFQYFNEKIGETPICLLDDIFSELDGKRTAAVLDILEGCGQTLISSADLKNHPGSAVHHLQTTPSTRNSEV</sequence>
<proteinExistence type="inferred from homology"/>
<feature type="chain" id="PRO_1000079595" description="DNA replication and repair protein RecF">
    <location>
        <begin position="1"/>
        <end position="371"/>
    </location>
</feature>
<feature type="binding site" evidence="1">
    <location>
        <begin position="30"/>
        <end position="37"/>
    </location>
    <ligand>
        <name>ATP</name>
        <dbReference type="ChEBI" id="CHEBI:30616"/>
    </ligand>
</feature>
<accession>A4SC23</accession>
<comment type="function">
    <text evidence="1">The RecF protein is involved in DNA metabolism; it is required for DNA replication and normal SOS inducibility. RecF binds preferentially to single-stranded, linear DNA. It also seems to bind ATP.</text>
</comment>
<comment type="subcellular location">
    <subcellularLocation>
        <location evidence="1">Cytoplasm</location>
    </subcellularLocation>
</comment>
<comment type="similarity">
    <text evidence="1">Belongs to the RecF family.</text>
</comment>
<protein>
    <recommendedName>
        <fullName evidence="1">DNA replication and repair protein RecF</fullName>
    </recommendedName>
</protein>
<organism>
    <name type="scientific">Chlorobium phaeovibrioides (strain DSM 265 / 1930)</name>
    <name type="common">Prosthecochloris vibrioformis (strain DSM 265)</name>
    <dbReference type="NCBI Taxonomy" id="290318"/>
    <lineage>
        <taxon>Bacteria</taxon>
        <taxon>Pseudomonadati</taxon>
        <taxon>Chlorobiota</taxon>
        <taxon>Chlorobiia</taxon>
        <taxon>Chlorobiales</taxon>
        <taxon>Chlorobiaceae</taxon>
        <taxon>Chlorobium/Pelodictyon group</taxon>
        <taxon>Chlorobium</taxon>
    </lineage>
</organism>
<gene>
    <name evidence="1" type="primary">recF</name>
    <name type="ordered locus">Cvib_0003</name>
</gene>
<evidence type="ECO:0000255" key="1">
    <source>
        <dbReference type="HAMAP-Rule" id="MF_00365"/>
    </source>
</evidence>
<dbReference type="EMBL" id="CP000607">
    <property type="protein sequence ID" value="ABP36032.1"/>
    <property type="molecule type" value="Genomic_DNA"/>
</dbReference>
<dbReference type="SMR" id="A4SC23"/>
<dbReference type="STRING" id="290318.Cvib_0003"/>
<dbReference type="KEGG" id="pvi:Cvib_0003"/>
<dbReference type="eggNOG" id="COG1195">
    <property type="taxonomic scope" value="Bacteria"/>
</dbReference>
<dbReference type="HOGENOM" id="CLU_040267_0_1_10"/>
<dbReference type="OrthoDB" id="9803889at2"/>
<dbReference type="GO" id="GO:0005737">
    <property type="term" value="C:cytoplasm"/>
    <property type="evidence" value="ECO:0007669"/>
    <property type="project" value="UniProtKB-SubCell"/>
</dbReference>
<dbReference type="GO" id="GO:0005524">
    <property type="term" value="F:ATP binding"/>
    <property type="evidence" value="ECO:0007669"/>
    <property type="project" value="UniProtKB-UniRule"/>
</dbReference>
<dbReference type="GO" id="GO:0016887">
    <property type="term" value="F:ATP hydrolysis activity"/>
    <property type="evidence" value="ECO:0007669"/>
    <property type="project" value="InterPro"/>
</dbReference>
<dbReference type="GO" id="GO:0003697">
    <property type="term" value="F:single-stranded DNA binding"/>
    <property type="evidence" value="ECO:0007669"/>
    <property type="project" value="UniProtKB-UniRule"/>
</dbReference>
<dbReference type="GO" id="GO:0006260">
    <property type="term" value="P:DNA replication"/>
    <property type="evidence" value="ECO:0007669"/>
    <property type="project" value="UniProtKB-UniRule"/>
</dbReference>
<dbReference type="GO" id="GO:0000731">
    <property type="term" value="P:DNA synthesis involved in DNA repair"/>
    <property type="evidence" value="ECO:0007669"/>
    <property type="project" value="TreeGrafter"/>
</dbReference>
<dbReference type="GO" id="GO:0006302">
    <property type="term" value="P:double-strand break repair"/>
    <property type="evidence" value="ECO:0007669"/>
    <property type="project" value="InterPro"/>
</dbReference>
<dbReference type="GO" id="GO:0009432">
    <property type="term" value="P:SOS response"/>
    <property type="evidence" value="ECO:0007669"/>
    <property type="project" value="UniProtKB-UniRule"/>
</dbReference>
<dbReference type="Gene3D" id="3.40.50.300">
    <property type="entry name" value="P-loop containing nucleotide triphosphate hydrolases"/>
    <property type="match status" value="1"/>
</dbReference>
<dbReference type="Gene3D" id="1.20.1050.90">
    <property type="entry name" value="RecF/RecN/SMC, N-terminal domain"/>
    <property type="match status" value="1"/>
</dbReference>
<dbReference type="HAMAP" id="MF_00365">
    <property type="entry name" value="RecF"/>
    <property type="match status" value="1"/>
</dbReference>
<dbReference type="InterPro" id="IPR001238">
    <property type="entry name" value="DNA-binding_RecF"/>
</dbReference>
<dbReference type="InterPro" id="IPR018078">
    <property type="entry name" value="DNA-binding_RecF_CS"/>
</dbReference>
<dbReference type="InterPro" id="IPR027417">
    <property type="entry name" value="P-loop_NTPase"/>
</dbReference>
<dbReference type="InterPro" id="IPR038729">
    <property type="entry name" value="Rad50/SbcC_AAA"/>
</dbReference>
<dbReference type="InterPro" id="IPR042174">
    <property type="entry name" value="RecF_2"/>
</dbReference>
<dbReference type="NCBIfam" id="TIGR00611">
    <property type="entry name" value="recf"/>
    <property type="match status" value="1"/>
</dbReference>
<dbReference type="PANTHER" id="PTHR32182">
    <property type="entry name" value="DNA REPLICATION AND REPAIR PROTEIN RECF"/>
    <property type="match status" value="1"/>
</dbReference>
<dbReference type="PANTHER" id="PTHR32182:SF0">
    <property type="entry name" value="DNA REPLICATION AND REPAIR PROTEIN RECF"/>
    <property type="match status" value="1"/>
</dbReference>
<dbReference type="Pfam" id="PF13476">
    <property type="entry name" value="AAA_23"/>
    <property type="match status" value="1"/>
</dbReference>
<dbReference type="SUPFAM" id="SSF52540">
    <property type="entry name" value="P-loop containing nucleoside triphosphate hydrolases"/>
    <property type="match status" value="1"/>
</dbReference>
<dbReference type="PROSITE" id="PS00617">
    <property type="entry name" value="RECF_1"/>
    <property type="match status" value="1"/>
</dbReference>
<keyword id="KW-0067">ATP-binding</keyword>
<keyword id="KW-0963">Cytoplasm</keyword>
<keyword id="KW-0227">DNA damage</keyword>
<keyword id="KW-0234">DNA repair</keyword>
<keyword id="KW-0235">DNA replication</keyword>
<keyword id="KW-0238">DNA-binding</keyword>
<keyword id="KW-0547">Nucleotide-binding</keyword>
<keyword id="KW-0742">SOS response</keyword>
<name>RECF_CHLPM</name>